<organism>
    <name type="scientific">Oxyuranus scutellatus scutellatus</name>
    <name type="common">Australian taipan</name>
    <name type="synonym">Coastal taipan</name>
    <dbReference type="NCBI Taxonomy" id="8667"/>
    <lineage>
        <taxon>Eukaryota</taxon>
        <taxon>Metazoa</taxon>
        <taxon>Chordata</taxon>
        <taxon>Craniata</taxon>
        <taxon>Vertebrata</taxon>
        <taxon>Euteleostomi</taxon>
        <taxon>Lepidosauria</taxon>
        <taxon>Squamata</taxon>
        <taxon>Bifurcata</taxon>
        <taxon>Unidentata</taxon>
        <taxon>Episquamata</taxon>
        <taxon>Toxicofera</taxon>
        <taxon>Serpentes</taxon>
        <taxon>Colubroidea</taxon>
        <taxon>Elapidae</taxon>
        <taxon>Hydrophiinae</taxon>
        <taxon>Oxyuranus</taxon>
    </lineage>
</organism>
<dbReference type="EMBL" id="AY691665">
    <property type="protein sequence ID" value="AAY47074.1"/>
    <property type="molecule type" value="mRNA"/>
</dbReference>
<dbReference type="SMR" id="Q4VRI0"/>
<dbReference type="GO" id="GO:0005576">
    <property type="term" value="C:extracellular region"/>
    <property type="evidence" value="ECO:0007669"/>
    <property type="project" value="UniProtKB-SubCell"/>
</dbReference>
<dbReference type="GO" id="GO:0090729">
    <property type="term" value="F:toxin activity"/>
    <property type="evidence" value="ECO:0007669"/>
    <property type="project" value="UniProtKB-KW"/>
</dbReference>
<dbReference type="CDD" id="cd00206">
    <property type="entry name" value="TFP_snake_toxin"/>
    <property type="match status" value="1"/>
</dbReference>
<dbReference type="Gene3D" id="2.10.60.10">
    <property type="entry name" value="CD59"/>
    <property type="match status" value="1"/>
</dbReference>
<dbReference type="InterPro" id="IPR003571">
    <property type="entry name" value="Snake_3FTx"/>
</dbReference>
<dbReference type="InterPro" id="IPR045860">
    <property type="entry name" value="Snake_toxin-like_sf"/>
</dbReference>
<dbReference type="SUPFAM" id="SSF57302">
    <property type="entry name" value="Snake toxin-like"/>
    <property type="match status" value="1"/>
</dbReference>
<evidence type="ECO:0000250" key="1"/>
<evidence type="ECO:0000250" key="2">
    <source>
        <dbReference type="UniProtKB" id="P60301"/>
    </source>
</evidence>
<evidence type="ECO:0000255" key="3"/>
<evidence type="ECO:0000305" key="4"/>
<protein>
    <recommendedName>
        <fullName>Scutelatoxin</fullName>
    </recommendedName>
    <alternativeName>
        <fullName>Three-finger toxin</fullName>
        <shortName>3FTx</shortName>
    </alternativeName>
</protein>
<keyword id="KW-1015">Disulfide bond</keyword>
<keyword id="KW-0964">Secreted</keyword>
<keyword id="KW-0732">Signal</keyword>
<keyword id="KW-0800">Toxin</keyword>
<name>3SXS_OXYSC</name>
<comment type="subcellular location">
    <subcellularLocation>
        <location evidence="1">Secreted</location>
    </subcellularLocation>
</comment>
<comment type="tissue specificity">
    <text evidence="4">Expressed by the venom gland.</text>
</comment>
<comment type="similarity">
    <text evidence="4">Belongs to the three-finger toxin family. Short-chain subfamily.</text>
</comment>
<accession>Q4VRI0</accession>
<reference key="1">
    <citation type="submission" date="2004-07" db="EMBL/GenBank/DDBJ databases">
        <authorList>
            <person name="Welton R.E."/>
            <person name="Burnell J.N."/>
        </authorList>
    </citation>
    <scope>NUCLEOTIDE SEQUENCE [MRNA]</scope>
    <source>
        <tissue>Venom gland</tissue>
    </source>
</reference>
<feature type="signal peptide" evidence="3">
    <location>
        <begin position="1"/>
        <end position="21"/>
    </location>
</feature>
<feature type="chain" id="PRO_0000316177" description="Scutelatoxin">
    <location>
        <begin position="22"/>
        <end position="79"/>
    </location>
</feature>
<feature type="disulfide bond" evidence="2">
    <location>
        <begin position="24"/>
        <end position="41"/>
    </location>
</feature>
<feature type="disulfide bond" evidence="2">
    <location>
        <begin position="34"/>
        <end position="59"/>
    </location>
</feature>
<feature type="disulfide bond" evidence="2">
    <location>
        <begin position="63"/>
        <end position="71"/>
    </location>
</feature>
<feature type="disulfide bond" evidence="2">
    <location>
        <begin position="72"/>
        <end position="77"/>
    </location>
</feature>
<proteinExistence type="inferred from homology"/>
<sequence length="79" mass="8923">MKTLLLTLVVMTIMCLDLGYTLTCYMNPSGTMVCKEHETMCYQLIVWTFQYRVLYLKGCTSSCPEGNNRACCSTGLCNN</sequence>